<comment type="function">
    <text evidence="1">Catalyzes the transfer of a phosphate group to glutamate to form L-glutamate 5-phosphate.</text>
</comment>
<comment type="catalytic activity">
    <reaction evidence="1">
        <text>L-glutamate + ATP = L-glutamyl 5-phosphate + ADP</text>
        <dbReference type="Rhea" id="RHEA:14877"/>
        <dbReference type="ChEBI" id="CHEBI:29985"/>
        <dbReference type="ChEBI" id="CHEBI:30616"/>
        <dbReference type="ChEBI" id="CHEBI:58274"/>
        <dbReference type="ChEBI" id="CHEBI:456216"/>
        <dbReference type="EC" id="2.7.2.11"/>
    </reaction>
</comment>
<comment type="pathway">
    <text evidence="1">Amino-acid biosynthesis; L-proline biosynthesis; L-glutamate 5-semialdehyde from L-glutamate: step 1/2.</text>
</comment>
<comment type="subcellular location">
    <subcellularLocation>
        <location evidence="1">Cytoplasm</location>
    </subcellularLocation>
</comment>
<comment type="similarity">
    <text evidence="1">Belongs to the glutamate 5-kinase family.</text>
</comment>
<feature type="chain" id="PRO_1000081091" description="Glutamate 5-kinase">
    <location>
        <begin position="1"/>
        <end position="372"/>
    </location>
</feature>
<feature type="domain" description="PUA" evidence="1">
    <location>
        <begin position="280"/>
        <end position="358"/>
    </location>
</feature>
<feature type="binding site" evidence="1">
    <location>
        <position position="14"/>
    </location>
    <ligand>
        <name>ATP</name>
        <dbReference type="ChEBI" id="CHEBI:30616"/>
    </ligand>
</feature>
<feature type="binding site" evidence="1">
    <location>
        <position position="54"/>
    </location>
    <ligand>
        <name>substrate</name>
    </ligand>
</feature>
<feature type="binding site" evidence="1">
    <location>
        <position position="141"/>
    </location>
    <ligand>
        <name>substrate</name>
    </ligand>
</feature>
<feature type="binding site" evidence="1">
    <location>
        <position position="153"/>
    </location>
    <ligand>
        <name>substrate</name>
    </ligand>
</feature>
<feature type="binding site" evidence="1">
    <location>
        <begin position="173"/>
        <end position="174"/>
    </location>
    <ligand>
        <name>ATP</name>
        <dbReference type="ChEBI" id="CHEBI:30616"/>
    </ligand>
</feature>
<proteinExistence type="inferred from homology"/>
<sequence length="372" mass="39876">MRDKVTGARRWVVKIGSALLTADGRGLDRNAMAVWVEQMVALHCAGIELVLVSSGAVAAGMSRLGWVSRPSAMHELQAAASVGQMGLVQAWESSFALHGLQTAQVLLTHDDLSDRKRYLNARSTLRTLVELGVVPVINENDTVVTDEIRFGDNDTLAALVANLVEADLLVILTDRDGMFDADPRNNPDAQLIYEARADDPQLDAVAGGSAGALGRGGMQTKLRAARLAARSGGHTVIVGGRIERVLDRLRAGERLGTLLTPDRSRKAARKQWLAGHLQMRGTLVLDDGAVKAVSQDHKSLLPVGVKAVQGSFRRGEMVVCVDQSGREVARGLVNYSALEAQKILGQPTDAIEALLGYVDGPELVHRDNLVLV</sequence>
<name>PROB_PSEP7</name>
<keyword id="KW-0028">Amino-acid biosynthesis</keyword>
<keyword id="KW-0067">ATP-binding</keyword>
<keyword id="KW-0963">Cytoplasm</keyword>
<keyword id="KW-0418">Kinase</keyword>
<keyword id="KW-0547">Nucleotide-binding</keyword>
<keyword id="KW-0641">Proline biosynthesis</keyword>
<keyword id="KW-0808">Transferase</keyword>
<reference key="1">
    <citation type="submission" date="2007-06" db="EMBL/GenBank/DDBJ databases">
        <authorList>
            <person name="Dodson R.J."/>
            <person name="Harkins D."/>
            <person name="Paulsen I.T."/>
        </authorList>
    </citation>
    <scope>NUCLEOTIDE SEQUENCE [LARGE SCALE GENOMIC DNA]</scope>
    <source>
        <strain>DSM 24068 / PA7</strain>
    </source>
</reference>
<dbReference type="EC" id="2.7.2.11" evidence="1"/>
<dbReference type="EMBL" id="CP000744">
    <property type="protein sequence ID" value="ABR81028.1"/>
    <property type="molecule type" value="Genomic_DNA"/>
</dbReference>
<dbReference type="RefSeq" id="WP_012077317.1">
    <property type="nucleotide sequence ID" value="NC_009656.1"/>
</dbReference>
<dbReference type="SMR" id="A6VBV2"/>
<dbReference type="GeneID" id="77223072"/>
<dbReference type="KEGG" id="pap:PSPA7_5205"/>
<dbReference type="HOGENOM" id="CLU_025400_2_0_6"/>
<dbReference type="UniPathway" id="UPA00098">
    <property type="reaction ID" value="UER00359"/>
</dbReference>
<dbReference type="Proteomes" id="UP000001582">
    <property type="component" value="Chromosome"/>
</dbReference>
<dbReference type="GO" id="GO:0005829">
    <property type="term" value="C:cytosol"/>
    <property type="evidence" value="ECO:0007669"/>
    <property type="project" value="TreeGrafter"/>
</dbReference>
<dbReference type="GO" id="GO:0005524">
    <property type="term" value="F:ATP binding"/>
    <property type="evidence" value="ECO:0007669"/>
    <property type="project" value="UniProtKB-KW"/>
</dbReference>
<dbReference type="GO" id="GO:0004349">
    <property type="term" value="F:glutamate 5-kinase activity"/>
    <property type="evidence" value="ECO:0007669"/>
    <property type="project" value="UniProtKB-UniRule"/>
</dbReference>
<dbReference type="GO" id="GO:0003723">
    <property type="term" value="F:RNA binding"/>
    <property type="evidence" value="ECO:0007669"/>
    <property type="project" value="InterPro"/>
</dbReference>
<dbReference type="GO" id="GO:0055129">
    <property type="term" value="P:L-proline biosynthetic process"/>
    <property type="evidence" value="ECO:0007669"/>
    <property type="project" value="UniProtKB-UniRule"/>
</dbReference>
<dbReference type="CDD" id="cd04242">
    <property type="entry name" value="AAK_G5K_ProB"/>
    <property type="match status" value="1"/>
</dbReference>
<dbReference type="CDD" id="cd21157">
    <property type="entry name" value="PUA_G5K"/>
    <property type="match status" value="1"/>
</dbReference>
<dbReference type="FunFam" id="2.30.130.10:FF:000003">
    <property type="entry name" value="Glutamate 5-kinase"/>
    <property type="match status" value="1"/>
</dbReference>
<dbReference type="FunFam" id="3.40.1160.10:FF:000003">
    <property type="entry name" value="Glutamate 5-kinase"/>
    <property type="match status" value="1"/>
</dbReference>
<dbReference type="FunFam" id="3.40.1160.10:FF:000038">
    <property type="entry name" value="Glutamate 5-kinase"/>
    <property type="match status" value="1"/>
</dbReference>
<dbReference type="Gene3D" id="3.40.1160.10">
    <property type="entry name" value="Acetylglutamate kinase-like"/>
    <property type="match status" value="2"/>
</dbReference>
<dbReference type="Gene3D" id="2.30.130.10">
    <property type="entry name" value="PUA domain"/>
    <property type="match status" value="1"/>
</dbReference>
<dbReference type="HAMAP" id="MF_00456">
    <property type="entry name" value="ProB"/>
    <property type="match status" value="1"/>
</dbReference>
<dbReference type="InterPro" id="IPR036393">
    <property type="entry name" value="AceGlu_kinase-like_sf"/>
</dbReference>
<dbReference type="InterPro" id="IPR001048">
    <property type="entry name" value="Asp/Glu/Uridylate_kinase"/>
</dbReference>
<dbReference type="InterPro" id="IPR041739">
    <property type="entry name" value="G5K_ProB"/>
</dbReference>
<dbReference type="InterPro" id="IPR001057">
    <property type="entry name" value="Glu/AcGlu_kinase"/>
</dbReference>
<dbReference type="InterPro" id="IPR011529">
    <property type="entry name" value="Glu_5kinase"/>
</dbReference>
<dbReference type="InterPro" id="IPR005715">
    <property type="entry name" value="Glu_5kinase/COase_Synthase"/>
</dbReference>
<dbReference type="InterPro" id="IPR019797">
    <property type="entry name" value="Glutamate_5-kinase_CS"/>
</dbReference>
<dbReference type="InterPro" id="IPR002478">
    <property type="entry name" value="PUA"/>
</dbReference>
<dbReference type="InterPro" id="IPR015947">
    <property type="entry name" value="PUA-like_sf"/>
</dbReference>
<dbReference type="InterPro" id="IPR036974">
    <property type="entry name" value="PUA_sf"/>
</dbReference>
<dbReference type="NCBIfam" id="TIGR01027">
    <property type="entry name" value="proB"/>
    <property type="match status" value="1"/>
</dbReference>
<dbReference type="PANTHER" id="PTHR43654">
    <property type="entry name" value="GLUTAMATE 5-KINASE"/>
    <property type="match status" value="1"/>
</dbReference>
<dbReference type="PANTHER" id="PTHR43654:SF1">
    <property type="entry name" value="ISOPENTENYL PHOSPHATE KINASE"/>
    <property type="match status" value="1"/>
</dbReference>
<dbReference type="Pfam" id="PF00696">
    <property type="entry name" value="AA_kinase"/>
    <property type="match status" value="1"/>
</dbReference>
<dbReference type="Pfam" id="PF01472">
    <property type="entry name" value="PUA"/>
    <property type="match status" value="1"/>
</dbReference>
<dbReference type="PIRSF" id="PIRSF000729">
    <property type="entry name" value="GK"/>
    <property type="match status" value="1"/>
</dbReference>
<dbReference type="PRINTS" id="PR00474">
    <property type="entry name" value="GLU5KINASE"/>
</dbReference>
<dbReference type="SMART" id="SM00359">
    <property type="entry name" value="PUA"/>
    <property type="match status" value="1"/>
</dbReference>
<dbReference type="SUPFAM" id="SSF53633">
    <property type="entry name" value="Carbamate kinase-like"/>
    <property type="match status" value="1"/>
</dbReference>
<dbReference type="SUPFAM" id="SSF88697">
    <property type="entry name" value="PUA domain-like"/>
    <property type="match status" value="1"/>
</dbReference>
<dbReference type="PROSITE" id="PS00902">
    <property type="entry name" value="GLUTAMATE_5_KINASE"/>
    <property type="match status" value="1"/>
</dbReference>
<dbReference type="PROSITE" id="PS50890">
    <property type="entry name" value="PUA"/>
    <property type="match status" value="1"/>
</dbReference>
<organism>
    <name type="scientific">Pseudomonas paraeruginosa (strain DSM 24068 / PA7)</name>
    <name type="common">Pseudomonas aeruginosa (strain PA7)</name>
    <dbReference type="NCBI Taxonomy" id="381754"/>
    <lineage>
        <taxon>Bacteria</taxon>
        <taxon>Pseudomonadati</taxon>
        <taxon>Pseudomonadota</taxon>
        <taxon>Gammaproteobacteria</taxon>
        <taxon>Pseudomonadales</taxon>
        <taxon>Pseudomonadaceae</taxon>
        <taxon>Pseudomonas</taxon>
        <taxon>Pseudomonas paraeruginosa</taxon>
    </lineage>
</organism>
<gene>
    <name evidence="1" type="primary">proB</name>
    <name type="ordered locus">PSPA7_5205</name>
</gene>
<protein>
    <recommendedName>
        <fullName evidence="1">Glutamate 5-kinase</fullName>
        <ecNumber evidence="1">2.7.2.11</ecNumber>
    </recommendedName>
    <alternativeName>
        <fullName evidence="1">Gamma-glutamyl kinase</fullName>
        <shortName evidence="1">GK</shortName>
    </alternativeName>
</protein>
<accession>A6VBV2</accession>
<evidence type="ECO:0000255" key="1">
    <source>
        <dbReference type="HAMAP-Rule" id="MF_00456"/>
    </source>
</evidence>